<protein>
    <recommendedName>
        <fullName evidence="1">NADPH dehydrogenase</fullName>
        <ecNumber evidence="1">1.6.99.1</ecNumber>
    </recommendedName>
</protein>
<accession>Q8Y4H1</accession>
<evidence type="ECO:0000255" key="1">
    <source>
        <dbReference type="HAMAP-Rule" id="MF_01614"/>
    </source>
</evidence>
<organism>
    <name type="scientific">Listeria monocytogenes serovar 1/2a (strain ATCC BAA-679 / EGD-e)</name>
    <dbReference type="NCBI Taxonomy" id="169963"/>
    <lineage>
        <taxon>Bacteria</taxon>
        <taxon>Bacillati</taxon>
        <taxon>Bacillota</taxon>
        <taxon>Bacilli</taxon>
        <taxon>Bacillales</taxon>
        <taxon>Listeriaceae</taxon>
        <taxon>Listeria</taxon>
    </lineage>
</organism>
<name>NAMA_LISMO</name>
<gene>
    <name evidence="1" type="primary">namA</name>
    <name type="ordered locus">lmo2471</name>
</gene>
<dbReference type="EC" id="1.6.99.1" evidence="1"/>
<dbReference type="EMBL" id="AL591983">
    <property type="protein sequence ID" value="CAD00549.1"/>
    <property type="molecule type" value="Genomic_DNA"/>
</dbReference>
<dbReference type="PIR" id="AG1383">
    <property type="entry name" value="AG1383"/>
</dbReference>
<dbReference type="RefSeq" id="NP_465994.1">
    <property type="nucleotide sequence ID" value="NC_003210.1"/>
</dbReference>
<dbReference type="RefSeq" id="WP_003732493.1">
    <property type="nucleotide sequence ID" value="NZ_CP149495.1"/>
</dbReference>
<dbReference type="SMR" id="Q8Y4H1"/>
<dbReference type="STRING" id="169963.gene:17595182"/>
<dbReference type="PaxDb" id="169963-lmo2471"/>
<dbReference type="EnsemblBacteria" id="CAD00549">
    <property type="protein sequence ID" value="CAD00549"/>
    <property type="gene ID" value="CAD00549"/>
</dbReference>
<dbReference type="GeneID" id="987354"/>
<dbReference type="KEGG" id="lmo:lmo2471"/>
<dbReference type="PATRIC" id="fig|169963.11.peg.2531"/>
<dbReference type="eggNOG" id="COG1902">
    <property type="taxonomic scope" value="Bacteria"/>
</dbReference>
<dbReference type="HOGENOM" id="CLU_012153_2_1_9"/>
<dbReference type="OrthoDB" id="9772736at2"/>
<dbReference type="PhylomeDB" id="Q8Y4H1"/>
<dbReference type="BioCyc" id="LMON169963:LMO2471-MONOMER"/>
<dbReference type="Proteomes" id="UP000000817">
    <property type="component" value="Chromosome"/>
</dbReference>
<dbReference type="GO" id="GO:0010181">
    <property type="term" value="F:FMN binding"/>
    <property type="evidence" value="ECO:0007669"/>
    <property type="project" value="UniProtKB-UniRule"/>
</dbReference>
<dbReference type="GO" id="GO:0050661">
    <property type="term" value="F:NADP binding"/>
    <property type="evidence" value="ECO:0007669"/>
    <property type="project" value="UniProtKB-UniRule"/>
</dbReference>
<dbReference type="GO" id="GO:0003959">
    <property type="term" value="F:NADPH dehydrogenase activity"/>
    <property type="evidence" value="ECO:0007669"/>
    <property type="project" value="UniProtKB-UniRule"/>
</dbReference>
<dbReference type="GO" id="GO:0009636">
    <property type="term" value="P:response to toxic substance"/>
    <property type="evidence" value="ECO:0007669"/>
    <property type="project" value="UniProtKB-KW"/>
</dbReference>
<dbReference type="CDD" id="cd02932">
    <property type="entry name" value="OYE_YqiM_FMN"/>
    <property type="match status" value="1"/>
</dbReference>
<dbReference type="FunFam" id="3.20.20.70:FF:000299">
    <property type="entry name" value="NADPH dehydrogenase"/>
    <property type="match status" value="1"/>
</dbReference>
<dbReference type="Gene3D" id="3.20.20.70">
    <property type="entry name" value="Aldolase class I"/>
    <property type="match status" value="1"/>
</dbReference>
<dbReference type="HAMAP" id="MF_01614">
    <property type="entry name" value="NamA"/>
    <property type="match status" value="1"/>
</dbReference>
<dbReference type="InterPro" id="IPR013785">
    <property type="entry name" value="Aldolase_TIM"/>
</dbReference>
<dbReference type="InterPro" id="IPR023663">
    <property type="entry name" value="NADPH_DH_bac"/>
</dbReference>
<dbReference type="InterPro" id="IPR001155">
    <property type="entry name" value="OxRdtase_FMN_N"/>
</dbReference>
<dbReference type="InterPro" id="IPR044152">
    <property type="entry name" value="YqjM-like"/>
</dbReference>
<dbReference type="NCBIfam" id="NF010047">
    <property type="entry name" value="PRK13523.1"/>
    <property type="match status" value="1"/>
</dbReference>
<dbReference type="PANTHER" id="PTHR43303">
    <property type="entry name" value="NADPH DEHYDROGENASE C23G7.10C-RELATED"/>
    <property type="match status" value="1"/>
</dbReference>
<dbReference type="PANTHER" id="PTHR43303:SF4">
    <property type="entry name" value="NADPH DEHYDROGENASE C23G7.10C-RELATED"/>
    <property type="match status" value="1"/>
</dbReference>
<dbReference type="Pfam" id="PF00724">
    <property type="entry name" value="Oxidored_FMN"/>
    <property type="match status" value="1"/>
</dbReference>
<dbReference type="SUPFAM" id="SSF51395">
    <property type="entry name" value="FMN-linked oxidoreductases"/>
    <property type="match status" value="1"/>
</dbReference>
<proteinExistence type="inferred from homology"/>
<keyword id="KW-0216">Detoxification</keyword>
<keyword id="KW-0285">Flavoprotein</keyword>
<keyword id="KW-0288">FMN</keyword>
<keyword id="KW-0521">NADP</keyword>
<keyword id="KW-0560">Oxidoreductase</keyword>
<keyword id="KW-1185">Reference proteome</keyword>
<comment type="function">
    <text evidence="1">Catalyzes the reduction of the double bond of an array of alpha,beta-unsaturated aldehydes and ketones. It also reduces the nitro group of nitroester and nitroaromatic compounds. It could have a role in detoxification processes.</text>
</comment>
<comment type="catalytic activity">
    <reaction evidence="1">
        <text>A + NADPH + H(+) = AH2 + NADP(+)</text>
        <dbReference type="Rhea" id="RHEA:13149"/>
        <dbReference type="ChEBI" id="CHEBI:13193"/>
        <dbReference type="ChEBI" id="CHEBI:15378"/>
        <dbReference type="ChEBI" id="CHEBI:17499"/>
        <dbReference type="ChEBI" id="CHEBI:57783"/>
        <dbReference type="ChEBI" id="CHEBI:58349"/>
        <dbReference type="EC" id="1.6.99.1"/>
    </reaction>
</comment>
<comment type="cofactor">
    <cofactor evidence="1">
        <name>FMN</name>
        <dbReference type="ChEBI" id="CHEBI:58210"/>
    </cofactor>
</comment>
<comment type="subunit">
    <text evidence="1">Homotetramer.</text>
</comment>
<comment type="similarity">
    <text evidence="1">Belongs to the NADH:flavin oxidoreductase/NADH oxidase family. NamA subfamily.</text>
</comment>
<feature type="chain" id="PRO_0000216124" description="NADPH dehydrogenase">
    <location>
        <begin position="1"/>
        <end position="338"/>
    </location>
</feature>
<feature type="binding site" evidence="1">
    <location>
        <begin position="22"/>
        <end position="25"/>
    </location>
    <ligand>
        <name>FMN</name>
        <dbReference type="ChEBI" id="CHEBI:58210"/>
    </ligand>
</feature>
<feature type="binding site" evidence="1">
    <location>
        <position position="27"/>
    </location>
    <ligand>
        <name>substrate</name>
    </ligand>
</feature>
<feature type="binding site" evidence="1">
    <location>
        <position position="59"/>
    </location>
    <ligand>
        <name>FMN</name>
        <dbReference type="ChEBI" id="CHEBI:58210"/>
    </ligand>
</feature>
<feature type="binding site" evidence="1">
    <location>
        <position position="101"/>
    </location>
    <ligand>
        <name>FMN</name>
        <dbReference type="ChEBI" id="CHEBI:58210"/>
    </ligand>
</feature>
<feature type="binding site" evidence="1">
    <location>
        <begin position="163"/>
        <end position="166"/>
    </location>
    <ligand>
        <name>substrate</name>
    </ligand>
</feature>
<feature type="binding site" evidence="1">
    <location>
        <position position="214"/>
    </location>
    <ligand>
        <name>FMN</name>
        <dbReference type="ChEBI" id="CHEBI:58210"/>
    </ligand>
</feature>
<feature type="binding site" evidence="1">
    <location>
        <begin position="306"/>
        <end position="307"/>
    </location>
    <ligand>
        <name>FMN</name>
        <dbReference type="ChEBI" id="CHEBI:58210"/>
    </ligand>
</feature>
<reference key="1">
    <citation type="journal article" date="2001" name="Science">
        <title>Comparative genomics of Listeria species.</title>
        <authorList>
            <person name="Glaser P."/>
            <person name="Frangeul L."/>
            <person name="Buchrieser C."/>
            <person name="Rusniok C."/>
            <person name="Amend A."/>
            <person name="Baquero F."/>
            <person name="Berche P."/>
            <person name="Bloecker H."/>
            <person name="Brandt P."/>
            <person name="Chakraborty T."/>
            <person name="Charbit A."/>
            <person name="Chetouani F."/>
            <person name="Couve E."/>
            <person name="de Daruvar A."/>
            <person name="Dehoux P."/>
            <person name="Domann E."/>
            <person name="Dominguez-Bernal G."/>
            <person name="Duchaud E."/>
            <person name="Durant L."/>
            <person name="Dussurget O."/>
            <person name="Entian K.-D."/>
            <person name="Fsihi H."/>
            <person name="Garcia-del Portillo F."/>
            <person name="Garrido P."/>
            <person name="Gautier L."/>
            <person name="Goebel W."/>
            <person name="Gomez-Lopez N."/>
            <person name="Hain T."/>
            <person name="Hauf J."/>
            <person name="Jackson D."/>
            <person name="Jones L.-M."/>
            <person name="Kaerst U."/>
            <person name="Kreft J."/>
            <person name="Kuhn M."/>
            <person name="Kunst F."/>
            <person name="Kurapkat G."/>
            <person name="Madueno E."/>
            <person name="Maitournam A."/>
            <person name="Mata Vicente J."/>
            <person name="Ng E."/>
            <person name="Nedjari H."/>
            <person name="Nordsiek G."/>
            <person name="Novella S."/>
            <person name="de Pablos B."/>
            <person name="Perez-Diaz J.-C."/>
            <person name="Purcell R."/>
            <person name="Remmel B."/>
            <person name="Rose M."/>
            <person name="Schlueter T."/>
            <person name="Simoes N."/>
            <person name="Tierrez A."/>
            <person name="Vazquez-Boland J.-A."/>
            <person name="Voss H."/>
            <person name="Wehland J."/>
            <person name="Cossart P."/>
        </authorList>
    </citation>
    <scope>NUCLEOTIDE SEQUENCE [LARGE SCALE GENOMIC DNA]</scope>
    <source>
        <strain>ATCC BAA-679 / EGD-e</strain>
    </source>
</reference>
<sequence length="338" mass="37005">MSKLFSEYKLKDVTLKNRIVMSPMCMYSVENKDGIATDFHFAHYVSRAAGGTGLVILEATAVQEVGRISEFDLGLWNDEQVPALKKLVGGLHYHGAKAGIQLAHAGRKAVLPGEIVAPSAIAFDEKSDKPVELTKEAIKEVVADFKRAAYRAKEAGFDVIEIHAAHGYLIHQFLSPITNRREDNYGGPAGNRYKILSDIIKAVKEVWDGPIIVRVSATDYAHGGLQLEDHIPFAKWMKADGVELIDVSTGGLVNVAPPVFPGYQVPFADEIRRGAGIATGALGLITRGEQAEEILCNERADLIIVGRELLRNPYFAKDAAKQLGETIEAPKQYSRAWK</sequence>